<protein>
    <recommendedName>
        <fullName>Troponin T, cardiac muscle</fullName>
        <shortName>TnTc</shortName>
    </recommendedName>
    <alternativeName>
        <fullName>Cardiac muscle troponin T</fullName>
        <shortName>cTnT</shortName>
    </alternativeName>
</protein>
<proteinExistence type="evidence at protein level"/>
<evidence type="ECO:0000250" key="1"/>
<evidence type="ECO:0000250" key="2">
    <source>
        <dbReference type="UniProtKB" id="P09741"/>
    </source>
</evidence>
<evidence type="ECO:0000250" key="3">
    <source>
        <dbReference type="UniProtKB" id="P13789"/>
    </source>
</evidence>
<evidence type="ECO:0000250" key="4">
    <source>
        <dbReference type="UniProtKB" id="P50752"/>
    </source>
</evidence>
<evidence type="ECO:0000256" key="5">
    <source>
        <dbReference type="SAM" id="MobiDB-lite"/>
    </source>
</evidence>
<evidence type="ECO:0000269" key="6">
    <source>
    </source>
</evidence>
<evidence type="ECO:0000269" key="7">
    <source>
    </source>
</evidence>
<evidence type="ECO:0000269" key="8">
    <source>
    </source>
</evidence>
<evidence type="ECO:0000269" key="9">
    <source>
    </source>
</evidence>
<evidence type="ECO:0000269" key="10">
    <source>
    </source>
</evidence>
<evidence type="ECO:0000269" key="11">
    <source>
    </source>
</evidence>
<evidence type="ECO:0000269" key="12">
    <source>
    </source>
</evidence>
<evidence type="ECO:0000269" key="13">
    <source>
    </source>
</evidence>
<evidence type="ECO:0000269" key="14">
    <source>
    </source>
</evidence>
<evidence type="ECO:0000269" key="15">
    <source>
    </source>
</evidence>
<evidence type="ECO:0000269" key="16">
    <source>
    </source>
</evidence>
<evidence type="ECO:0000269" key="17">
    <source>
    </source>
</evidence>
<evidence type="ECO:0000269" key="18">
    <source>
    </source>
</evidence>
<evidence type="ECO:0000269" key="19">
    <source>
    </source>
</evidence>
<evidence type="ECO:0000269" key="20">
    <source>
    </source>
</evidence>
<evidence type="ECO:0000269" key="21">
    <source>
    </source>
</evidence>
<evidence type="ECO:0000269" key="22">
    <source>
    </source>
</evidence>
<evidence type="ECO:0000269" key="23">
    <source>
    </source>
</evidence>
<evidence type="ECO:0000269" key="24">
    <source>
    </source>
</evidence>
<evidence type="ECO:0000269" key="25">
    <source ref="19"/>
</evidence>
<evidence type="ECO:0000303" key="26">
    <source>
    </source>
</evidence>
<evidence type="ECO:0000303" key="27">
    <source>
    </source>
</evidence>
<evidence type="ECO:0000303" key="28">
    <source>
    </source>
</evidence>
<evidence type="ECO:0000303" key="29">
    <source>
    </source>
</evidence>
<evidence type="ECO:0000303" key="30">
    <source>
    </source>
</evidence>
<evidence type="ECO:0000303" key="31">
    <source>
    </source>
</evidence>
<evidence type="ECO:0000305" key="32"/>
<evidence type="ECO:0007829" key="33">
    <source>
        <dbReference type="PDB" id="4Y99"/>
    </source>
</evidence>
<sequence>MSDIEEVVEEYEEEEQEEAAVEEEEDWREDEDEQEEAAEEDAEAEAETEETRAEEDEEEEEAKEAEDGPMEESKPKPRSFMPNLVPPKIPDGERVDFDDIHRKRMEKDLNELQALIEAHFENRKKEEEELVSLKDRIERRRAERAEQQRIRNEREKERQNRLAEERARREEEENRRKAEDEARKKKALSNMMHFGGYIQKQAQTERKSGKRQTEREKKKKILAERRKVLAIDHLNEDQLREKAKELWQSIYNLEAEKFDLQEKFKQQKYEINVLRNRINDNQKVSKTRGKAKVTGRWK</sequence>
<comment type="function">
    <text>Troponin T is the tropomyosin-binding subunit of troponin, the thin filament regulatory complex which confers calcium-sensitivity to striated muscle actomyosin ATPase activity.</text>
</comment>
<comment type="interaction">
    <interactant intactId="EBI-8485957">
        <id>P45379</id>
    </interactant>
    <interactant intactId="EBI-399257">
        <id>Q15014</id>
        <label>MORF4L2</label>
    </interactant>
    <organismsDiffer>false</organismsDiffer>
    <experiments>3</experiments>
</comment>
<comment type="interaction">
    <interactant intactId="EBI-17559309">
        <id>P45379-11</id>
    </interactant>
    <interactant intactId="EBI-710124">
        <id>O60341</id>
        <label>KDM1A</label>
    </interactant>
    <organismsDiffer>false</organismsDiffer>
    <experiments>3</experiments>
</comment>
<comment type="interaction">
    <interactant intactId="EBI-17559309">
        <id>P45379-11</id>
    </interactant>
    <interactant intactId="EBI-8852072">
        <id>Q9UH92-3</id>
        <label>MLX</label>
    </interactant>
    <organismsDiffer>false</organismsDiffer>
    <experiments>3</experiments>
</comment>
<comment type="interaction">
    <interactant intactId="EBI-17559309">
        <id>P45379-11</id>
    </interactant>
    <interactant intactId="EBI-10288852">
        <id>Q9UBU8-2</id>
        <label>MORF4L1</label>
    </interactant>
    <organismsDiffer>false</organismsDiffer>
    <experiments>3</experiments>
</comment>
<comment type="interaction">
    <interactant intactId="EBI-17559309">
        <id>P45379-11</id>
    </interactant>
    <interactant intactId="EBI-641666">
        <id>Q15172</id>
        <label>PPP2R5A</label>
    </interactant>
    <organismsDiffer>false</organismsDiffer>
    <experiments>3</experiments>
</comment>
<comment type="interaction">
    <interactant intactId="EBI-17559309">
        <id>P45379-11</id>
    </interactant>
    <interactant intactId="EBI-746692">
        <id>P19237</id>
        <label>TNNI1</label>
    </interactant>
    <organismsDiffer>false</organismsDiffer>
    <experiments>3</experiments>
</comment>
<comment type="interaction">
    <interactant intactId="EBI-17559309">
        <id>P45379-11</id>
    </interactant>
    <interactant intactId="EBI-12151635">
        <id>P13805-3</id>
        <label>TNNT1</label>
    </interactant>
    <organismsDiffer>false</organismsDiffer>
    <experiments>3</experiments>
</comment>
<comment type="interaction">
    <interactant intactId="EBI-17559309">
        <id>P45379-11</id>
    </interactant>
    <interactant intactId="EBI-17559309">
        <id>P45379-11</id>
        <label>TNNT2</label>
    </interactant>
    <organismsDiffer>false</organismsDiffer>
    <experiments>3</experiments>
</comment>
<comment type="interaction">
    <interactant intactId="EBI-17559309">
        <id>P45379-11</id>
    </interactant>
    <interactant intactId="EBI-11525489">
        <id>Q86WT6-2</id>
        <label>TRIM69</label>
    </interactant>
    <organismsDiffer>false</organismsDiffer>
    <experiments>3</experiments>
</comment>
<comment type="alternative products">
    <event type="alternative splicing"/>
    <isoform>
        <id>P45379-1</id>
        <name>1</name>
        <name>TNT1</name>
        <sequence type="displayed"/>
    </isoform>
    <isoform>
        <id>P45379-2</id>
        <name>2</name>
        <sequence type="described" ref="VSP_006644"/>
    </isoform>
    <isoform>
        <id>P45379-3</id>
        <name>3</name>
        <sequence type="described" ref="VSP_006645"/>
    </isoform>
    <isoform>
        <id>P45379-4</id>
        <name>4</name>
        <sequence type="described" ref="VSP_006644 VSP_006645"/>
    </isoform>
    <isoform>
        <id>P45379-5</id>
        <name>5</name>
        <sequence type="described" ref="VSP_006647"/>
    </isoform>
    <isoform>
        <id>P45379-6</id>
        <name>6</name>
        <name>TNT3</name>
        <sequence type="described" ref="VSP_006643"/>
    </isoform>
    <isoform>
        <id>P45379-7</id>
        <name>7</name>
        <name>TNT4</name>
        <sequence type="described" ref="VSP_006642"/>
    </isoform>
    <isoform>
        <id>P45379-8</id>
        <name>8</name>
        <name>TNT2</name>
        <sequence type="described" ref="VSP_006641"/>
    </isoform>
    <isoform>
        <id>P45379-9</id>
        <name>9</name>
        <sequence type="described" ref="VSP_006646"/>
    </isoform>
    <isoform>
        <id>P45379-10</id>
        <name>10</name>
        <sequence type="described" ref="VSP_006648"/>
    </isoform>
    <isoform>
        <id>P45379-11</id>
        <name>11</name>
        <sequence type="described" ref="VSP_006643 VSP_006648"/>
    </isoform>
    <isoform>
        <id>P45379-12</id>
        <name>12</name>
        <sequence type="described" ref="VSP_006645 VSP_006646 VSP_006648"/>
    </isoform>
    <text>Additional isoforms seem to exist. Experimental confirmation may be lacking for some isoforms.</text>
</comment>
<comment type="tissue specificity">
    <text>Heart. The fetal heart shows a greater expression in the atrium than in the ventricle, while the adult heart shows a greater expression in the ventricle than in the atrium. Isoform 6 predominates in normal adult heart. Isoforms 1, 7 and 8 are expressed in fetal heart. Isoform 7 is also expressed in failing adult heart.</text>
</comment>
<comment type="PTM">
    <text evidence="1">Phosphorylation at Thr-213 by PRKCA induces significant reduction in myofilament calcium sensitivity and actomyosin ATPase activity.</text>
</comment>
<comment type="disease" evidence="6 7 10 11 13 15 17 18 19 20 21 22 23 25">
    <disease id="DI-00234">
        <name>Cardiomyopathy, familial hypertrophic, 2</name>
        <acronym>CMH2</acronym>
        <description>A hereditary heart disorder characterized by ventricular hypertrophy, which is usually asymmetric and often involves the interventricular septum. The symptoms include dyspnea, syncope, collapse, palpitations, and chest pain. They can be readily provoked by exercise. The disorder has inter- and intrafamilial variability ranging from benign to malignant forms with high risk of cardiac failure and sudden cardiac death.</description>
        <dbReference type="MIM" id="115195"/>
    </disease>
    <text>The disease is caused by variants affecting the gene represented in this entry.</text>
</comment>
<comment type="disease" evidence="8 9 12 14 17">
    <disease id="DI-00213">
        <name>Cardiomyopathy, dilated, 1D</name>
        <acronym>CMD1D</acronym>
        <description>A disorder characterized by ventricular dilation and impaired systolic function, resulting in congestive heart failure and arrhythmia. Patients are at risk of premature death.</description>
        <dbReference type="MIM" id="601494"/>
    </disease>
    <text>The disease is caused by variants affecting the gene represented in this entry.</text>
</comment>
<comment type="disease" evidence="16">
    <disease id="DI-00247">
        <name>Cardiomyopathy, familial restrictive 3</name>
        <acronym>RCM3</acronym>
        <description>A heart disorder characterized by impaired filling of the ventricles with reduced diastolic volume, in the presence of normal or near normal wall thickness and systolic function.</description>
        <dbReference type="MIM" id="612422"/>
    </disease>
    <text>The disease is caused by variants affecting the gene represented in this entry.</text>
</comment>
<comment type="similarity">
    <text evidence="32">Belongs to the troponin T family.</text>
</comment>
<name>TNNT2_HUMAN</name>
<feature type="initiator methionine" description="Removed" evidence="2">
    <location>
        <position position="1"/>
    </location>
</feature>
<feature type="chain" id="PRO_0000186173" description="Troponin T, cardiac muscle">
    <location>
        <begin position="2"/>
        <end position="298"/>
    </location>
</feature>
<feature type="region of interest" description="Disordered" evidence="5">
    <location>
        <begin position="1"/>
        <end position="95"/>
    </location>
</feature>
<feature type="region of interest" description="Disordered" evidence="5">
    <location>
        <begin position="120"/>
        <end position="219"/>
    </location>
</feature>
<feature type="compositionally biased region" description="Acidic residues" evidence="5">
    <location>
        <begin position="1"/>
        <end position="70"/>
    </location>
</feature>
<feature type="compositionally biased region" description="Basic and acidic residues" evidence="5">
    <location>
        <begin position="120"/>
        <end position="183"/>
    </location>
</feature>
<feature type="compositionally biased region" description="Basic and acidic residues" evidence="5">
    <location>
        <begin position="203"/>
        <end position="219"/>
    </location>
</feature>
<feature type="modified residue" description="N-acetylserine" evidence="2">
    <location>
        <position position="2"/>
    </location>
</feature>
<feature type="modified residue" description="Phosphoserine; by CK2" evidence="3">
    <location>
        <position position="2"/>
    </location>
</feature>
<feature type="modified residue" description="Phosphothreonine; by PKC/PRKCA" evidence="3">
    <location>
        <position position="204"/>
    </location>
</feature>
<feature type="modified residue" description="Phosphoserine; by PKC/PRKCA" evidence="4">
    <location>
        <position position="208"/>
    </location>
</feature>
<feature type="modified residue" description="Phosphothreonine; by PKC/PRKCA and RAF1" evidence="3">
    <location>
        <position position="213"/>
    </location>
</feature>
<feature type="modified residue" description="Phosphothreonine; by PKC/PRKCA" evidence="3">
    <location>
        <position position="294"/>
    </location>
</feature>
<feature type="splice variant" id="VSP_006642" description="In isoform 7." evidence="28">
    <location>
        <begin position="18"/>
        <end position="32"/>
    </location>
</feature>
<feature type="splice variant" id="VSP_006641" description="In isoform 8." evidence="28">
    <location>
        <begin position="18"/>
        <end position="22"/>
    </location>
</feature>
<feature type="splice variant" id="VSP_006643" description="In isoform 6 and isoform 11." evidence="26 27 28 29 30 31">
    <location>
        <begin position="23"/>
        <end position="32"/>
    </location>
</feature>
<feature type="splice variant" id="VSP_006644" description="In isoform 2 and isoform 4." evidence="29">
    <location>
        <position position="23"/>
    </location>
</feature>
<feature type="splice variant" id="VSP_006645" description="In isoform 3, isoform 4 and isoform 12." evidence="29 30">
    <location>
        <position position="54"/>
    </location>
</feature>
<feature type="splice variant" id="VSP_006646" description="In isoform 9 and isoform 12." evidence="30">
    <location>
        <begin position="99"/>
        <end position="137"/>
    </location>
</feature>
<feature type="splice variant" id="VSP_006648" description="In isoform 10, isoform 11 and isoform 12." evidence="27 29 30">
    <location>
        <begin position="201"/>
        <end position="203"/>
    </location>
</feature>
<feature type="splice variant" id="VSP_006647" description="In isoform 5." evidence="29">
    <location>
        <position position="201"/>
    </location>
</feature>
<feature type="sequence variant" id="VAR_067259" description="In CMH2; dbSNP:rs200754249." evidence="17">
    <original>A</original>
    <variation>V</variation>
    <location>
        <position position="38"/>
    </location>
</feature>
<feature type="sequence variant" id="VAR_019877" description="In CMH2; dbSNP:rs886039053." evidence="10">
    <original>F</original>
    <variation>L</variation>
    <location>
        <position position="80"/>
    </location>
</feature>
<feature type="sequence variant" id="VAR_007605" description="In CMH2; dbSNP:rs121964855." evidence="19">
    <original>I</original>
    <variation>N</variation>
    <location>
        <position position="89"/>
    </location>
</feature>
<feature type="sequence variant" id="VAR_016195" description="In CMH2; dbSNP:rs121964856." evidence="20">
    <original>R</original>
    <variation>L</variation>
    <location>
        <position position="102"/>
    </location>
</feature>
<feature type="sequence variant" id="VAR_007606" description="In CMH2; dbSNP:rs121964856." evidence="19">
    <original>R</original>
    <variation>Q</variation>
    <location>
        <position position="102"/>
    </location>
</feature>
<feature type="sequence variant" id="VAR_016196" description="In CMH2; dbSNP:rs397516456." evidence="21">
    <original>R</original>
    <variation>W</variation>
    <location>
        <position position="102"/>
    </location>
</feature>
<feature type="sequence variant" id="VAR_009194" description="In CMH2; dbSNP:rs397516457." evidence="6">
    <original>R</original>
    <variation>L</variation>
    <location>
        <position position="104"/>
    </location>
</feature>
<feature type="sequence variant" id="VAR_016197" description="In CMH2; dbSNP:rs727504245." evidence="22">
    <original>A</original>
    <variation>V</variation>
    <location>
        <position position="114"/>
    </location>
</feature>
<feature type="sequence variant" id="VAR_007607" description="In CMH2; dbSNP:rs121964858." evidence="18 23">
    <original>F</original>
    <variation>I</variation>
    <location>
        <position position="120"/>
    </location>
</feature>
<feature type="sequence variant" id="VAR_019878" description="In CMH2; dbSNP:rs121964858." evidence="10">
    <original>F</original>
    <variation>V</variation>
    <location>
        <position position="120"/>
    </location>
</feature>
<feature type="sequence variant" id="VAR_013021" description="In dbSNP:rs2996496.">
    <original>R</original>
    <variation>K</variation>
    <location>
        <position position="139"/>
    </location>
</feature>
<feature type="sequence variant" id="VAR_042747" description="In CMH2; dbSNP:rs397516463." evidence="13">
    <original>R</original>
    <variation>C</variation>
    <location>
        <position position="140"/>
    </location>
</feature>
<feature type="sequence variant" id="VAR_029450" description="In dbSNP:rs2996496.">
    <original>R</original>
    <variation>K</variation>
    <location>
        <position position="140"/>
    </location>
</feature>
<feature type="sequence variant" id="VAR_043983" description="In CMD1D; dbSNP:rs74315380." evidence="12 17">
    <original>R</original>
    <variation>W</variation>
    <location>
        <position position="141"/>
    </location>
</feature>
<feature type="sequence variant" id="VAR_016198" description="In CMD1D; dbSNP:rs74315379." evidence="9 14">
    <original>R</original>
    <variation>W</variation>
    <location>
        <position position="151"/>
    </location>
</feature>
<feature type="sequence variant" id="VAR_007608" description="In CMH2.">
    <location>
        <position position="170"/>
    </location>
</feature>
<feature type="sequence variant" id="VAR_007609" description="In CMH2." evidence="18">
    <original>E</original>
    <variation>K</variation>
    <location>
        <position position="173"/>
    </location>
</feature>
<feature type="sequence variant" id="VAR_016199" description="In CMH2; dbSNP:rs727504246." evidence="7">
    <original>S</original>
    <variation>F</variation>
    <location>
        <position position="189"/>
    </location>
</feature>
<feature type="sequence variant" id="VAR_022931" description="In CMD1D." evidence="8">
    <location>
        <position position="210"/>
    </location>
</feature>
<feature type="sequence variant" id="VAR_043984" description="In CMD1D; dbSNP:rs121964860." evidence="12">
    <original>R</original>
    <variation>L</variation>
    <location>
        <position position="215"/>
    </location>
</feature>
<feature type="sequence variant" id="VAR_043985" description="In CMD1D." evidence="12 17">
    <location>
        <position position="220"/>
    </location>
</feature>
<feature type="sequence variant" id="VAR_042748" description="In dbSNP:rs45520032.">
    <original>I</original>
    <variation>T</variation>
    <location>
        <position position="221"/>
    </location>
</feature>
<feature type="sequence variant" id="VAR_057310" description="In dbSNP:rs45520032.">
    <original>I</original>
    <variation>T</variation>
    <location>
        <position position="231"/>
    </location>
</feature>
<feature type="sequence variant" id="VAR_013022" description="In dbSNP:rs2996495.">
    <original>S</original>
    <variation>T</variation>
    <location>
        <position position="249"/>
    </location>
</feature>
<feature type="sequence variant" id="VAR_007610" description="In CMH2; dbSNP:rs45466197." evidence="18">
    <original>E</original>
    <variation>D</variation>
    <location>
        <position position="254"/>
    </location>
</feature>
<feature type="sequence variant" id="VAR_007611" description="In dbSNP:rs3730238." evidence="24">
    <original>K</original>
    <variation>R</variation>
    <location>
        <position position="263"/>
    </location>
</feature>
<feature type="sequence variant" id="VAR_029451" description="In dbSNP:rs4523540.">
    <original>N</original>
    <variation>Y</variation>
    <location>
        <position position="279"/>
    </location>
</feature>
<feature type="sequence variant" id="VAR_019879" description="In CMH2; dbSNP:rs863225119." evidence="10">
    <original>N</original>
    <variation>I</variation>
    <location>
        <position position="281"/>
    </location>
</feature>
<feature type="sequence variant" id="VAR_007612" description="In CMH2; dbSNP:rs121964857." evidence="15 17 18">
    <original>R</original>
    <variation>C</variation>
    <location>
        <position position="288"/>
    </location>
</feature>
<feature type="sequence variant" id="VAR_007613" description="In CMH2; dbSNP:rs397516484." evidence="11 25">
    <original>R</original>
    <variation>P</variation>
    <location>
        <position position="288"/>
    </location>
</feature>
<feature type="sequence variant" id="VAR_019880" description="In CMH2; dbSNP:rs367785431." evidence="10">
    <original>R</original>
    <variation>C</variation>
    <location>
        <position position="296"/>
    </location>
</feature>
<feature type="sequence conflict" description="In Ref. 12; CAA70840." evidence="32" ref="12">
    <original>K</original>
    <variation>E</variation>
    <location>
        <position position="242"/>
    </location>
</feature>
<feature type="helix" evidence="33">
    <location>
        <begin position="210"/>
        <end position="225"/>
    </location>
</feature>
<feature type="helix" evidence="33">
    <location>
        <begin position="236"/>
        <end position="280"/>
    </location>
</feature>
<keyword id="KW-0002">3D-structure</keyword>
<keyword id="KW-0007">Acetylation</keyword>
<keyword id="KW-0025">Alternative splicing</keyword>
<keyword id="KW-0122">Cardiomyopathy</keyword>
<keyword id="KW-0903">Direct protein sequencing</keyword>
<keyword id="KW-0225">Disease variant</keyword>
<keyword id="KW-0514">Muscle protein</keyword>
<keyword id="KW-0597">Phosphoprotein</keyword>
<keyword id="KW-1267">Proteomics identification</keyword>
<keyword id="KW-1185">Reference proteome</keyword>
<gene>
    <name type="primary">TNNT2</name>
</gene>
<reference key="1">
    <citation type="journal article" date="1993" name="FEBS Lett.">
        <title>Molecular cloning and developmental expression of human cardiac troponin T.</title>
        <authorList>
            <person name="Mesnard L."/>
            <person name="Samson F."/>
            <person name="Espinasse I."/>
            <person name="Durand J."/>
            <person name="Neveux J.-Y."/>
            <person name="Mercadier J.-J."/>
        </authorList>
    </citation>
    <scope>NUCLEOTIDE SEQUENCE [MRNA] (ISOFORM 6)</scope>
    <source>
        <tissue>Heart</tissue>
    </source>
</reference>
<reference key="2">
    <citation type="journal article" date="1994" name="Genomics">
        <title>Human cardiac troponin T: identification of fetal isoforms and assignment of the TNNT2 locus to chromosome 1q.</title>
        <authorList>
            <person name="Townsend P.J."/>
            <person name="Farza H."/>
            <person name="Macgeoch C."/>
            <person name="Spurr N.K."/>
            <person name="Wade R."/>
            <person name="Gahlman R."/>
            <person name="Yacoub M.H."/>
            <person name="Barton P.J.R."/>
        </authorList>
    </citation>
    <scope>NUCLEOTIDE SEQUENCE [MRNA] (ISOFORMS 1; 6 AND 12)</scope>
    <source>
        <tissue>Heart muscle</tissue>
    </source>
</reference>
<reference key="3">
    <citation type="journal article" date="1995" name="J. Mol. Cell. Cardiol.">
        <title>Molecular cloning of human cardiac troponin T isoforms: expression in developing and failing heart.</title>
        <authorList>
            <person name="Townsend P.J."/>
            <person name="Barton P.J.R."/>
            <person name="Yacoub M.H."/>
            <person name="Farza H."/>
        </authorList>
    </citation>
    <scope>NUCLEOTIDE SEQUENCE [MRNA]</scope>
    <scope>ALTERNATIVE SPLICING</scope>
    <source>
        <tissue>Fetal heart</tissue>
    </source>
</reference>
<reference key="4">
    <citation type="journal article" date="1995" name="Circ. Res.">
        <title>Molecular basis of human cardiac troponin T isoforms expressed in the developing, adult, and failing heart.</title>
        <authorList>
            <person name="Anderson P.A."/>
            <person name="Greig A."/>
            <person name="Mark T.M."/>
            <person name="Malouf N.N."/>
            <person name="Oakeley A.E."/>
            <person name="Ungerleider R.M."/>
            <person name="Allen P.D."/>
            <person name="Kay B.K."/>
        </authorList>
    </citation>
    <scope>NUCLEOTIDE SEQUENCE [MRNA] (ISOFORMS 1; 6; 7 AND 8)</scope>
    <source>
        <tissue>Heart</tissue>
    </source>
</reference>
<reference key="5">
    <citation type="journal article" date="1995" name="Circ. Res.">
        <title>Human cardiac troponin T: cloning and expression of new isoforms in the normal and failing heart.</title>
        <authorList>
            <person name="Mesnard L."/>
            <person name="Logeart D."/>
            <person name="Taviaux S."/>
            <person name="Diriong S."/>
            <person name="Mercadier J.-J."/>
            <person name="Samson F."/>
        </authorList>
    </citation>
    <scope>NUCLEOTIDE SEQUENCE [MRNA] (ISOFORMS 1; 2; 3; 4; 5; 6 AND 10)</scope>
    <source>
        <tissue>Fetal heart</tissue>
    </source>
</reference>
<reference key="6">
    <citation type="journal article" date="1998" name="Hum. Mutat.">
        <title>A rapid protocol for cardiac troponin T gene mutation detection in familial hypertrophic cardiomyopathy.</title>
        <authorList>
            <person name="Gerull B."/>
            <person name="Osterziel K.-J."/>
            <person name="Witt C."/>
            <person name="Dietz R."/>
            <person name="Thierfelder L."/>
        </authorList>
    </citation>
    <scope>NUCLEOTIDE SEQUENCE [GENOMIC DNA] (ISOFORM 6)</scope>
    <scope>VARIANT CMH2 ILE-120</scope>
    <source>
        <tissue>Heart muscle</tissue>
    </source>
</reference>
<reference key="7">
    <citation type="submission" date="2001-06" db="EMBL/GenBank/DDBJ databases">
        <title>Genomic organization of the human cardiac troponin T gene (TNNT2) and characterization of the candidate promoter region.</title>
        <authorList>
            <person name="D'Cruz L.G."/>
            <person name="Oberoi J."/>
            <person name="Mughal F."/>
            <person name="Steffensen U."/>
            <person name="Steffensen M."/>
            <person name="Kubo T."/>
            <person name="Mogensen J."/>
            <person name="McKoy G."/>
            <person name="O'Donnoghue A."/>
            <person name="Pondel M."/>
            <person name="McKenna W.J."/>
            <person name="Carter N.D."/>
            <person name="Baboonian C."/>
        </authorList>
    </citation>
    <scope>NUCLEOTIDE SEQUENCE [GENOMIC DNA] (ISOFORM 6)</scope>
</reference>
<reference key="8">
    <citation type="journal article" date="2004" name="Nat. Genet.">
        <title>Complete sequencing and characterization of 21,243 full-length human cDNAs.</title>
        <authorList>
            <person name="Ota T."/>
            <person name="Suzuki Y."/>
            <person name="Nishikawa T."/>
            <person name="Otsuki T."/>
            <person name="Sugiyama T."/>
            <person name="Irie R."/>
            <person name="Wakamatsu A."/>
            <person name="Hayashi K."/>
            <person name="Sato H."/>
            <person name="Nagai K."/>
            <person name="Kimura K."/>
            <person name="Makita H."/>
            <person name="Sekine M."/>
            <person name="Obayashi M."/>
            <person name="Nishi T."/>
            <person name="Shibahara T."/>
            <person name="Tanaka T."/>
            <person name="Ishii S."/>
            <person name="Yamamoto J."/>
            <person name="Saito K."/>
            <person name="Kawai Y."/>
            <person name="Isono Y."/>
            <person name="Nakamura Y."/>
            <person name="Nagahari K."/>
            <person name="Murakami K."/>
            <person name="Yasuda T."/>
            <person name="Iwayanagi T."/>
            <person name="Wagatsuma M."/>
            <person name="Shiratori A."/>
            <person name="Sudo H."/>
            <person name="Hosoiri T."/>
            <person name="Kaku Y."/>
            <person name="Kodaira H."/>
            <person name="Kondo H."/>
            <person name="Sugawara M."/>
            <person name="Takahashi M."/>
            <person name="Kanda K."/>
            <person name="Yokoi T."/>
            <person name="Furuya T."/>
            <person name="Kikkawa E."/>
            <person name="Omura Y."/>
            <person name="Abe K."/>
            <person name="Kamihara K."/>
            <person name="Katsuta N."/>
            <person name="Sato K."/>
            <person name="Tanikawa M."/>
            <person name="Yamazaki M."/>
            <person name="Ninomiya K."/>
            <person name="Ishibashi T."/>
            <person name="Yamashita H."/>
            <person name="Murakawa K."/>
            <person name="Fujimori K."/>
            <person name="Tanai H."/>
            <person name="Kimata M."/>
            <person name="Watanabe M."/>
            <person name="Hiraoka S."/>
            <person name="Chiba Y."/>
            <person name="Ishida S."/>
            <person name="Ono Y."/>
            <person name="Takiguchi S."/>
            <person name="Watanabe S."/>
            <person name="Yosida M."/>
            <person name="Hotuta T."/>
            <person name="Kusano J."/>
            <person name="Kanehori K."/>
            <person name="Takahashi-Fujii A."/>
            <person name="Hara H."/>
            <person name="Tanase T.-O."/>
            <person name="Nomura Y."/>
            <person name="Togiya S."/>
            <person name="Komai F."/>
            <person name="Hara R."/>
            <person name="Takeuchi K."/>
            <person name="Arita M."/>
            <person name="Imose N."/>
            <person name="Musashino K."/>
            <person name="Yuuki H."/>
            <person name="Oshima A."/>
            <person name="Sasaki N."/>
            <person name="Aotsuka S."/>
            <person name="Yoshikawa Y."/>
            <person name="Matsunawa H."/>
            <person name="Ichihara T."/>
            <person name="Shiohata N."/>
            <person name="Sano S."/>
            <person name="Moriya S."/>
            <person name="Momiyama H."/>
            <person name="Satoh N."/>
            <person name="Takami S."/>
            <person name="Terashima Y."/>
            <person name="Suzuki O."/>
            <person name="Nakagawa S."/>
            <person name="Senoh A."/>
            <person name="Mizoguchi H."/>
            <person name="Goto Y."/>
            <person name="Shimizu F."/>
            <person name="Wakebe H."/>
            <person name="Hishigaki H."/>
            <person name="Watanabe T."/>
            <person name="Sugiyama A."/>
            <person name="Takemoto M."/>
            <person name="Kawakami B."/>
            <person name="Yamazaki M."/>
            <person name="Watanabe K."/>
            <person name="Kumagai A."/>
            <person name="Itakura S."/>
            <person name="Fukuzumi Y."/>
            <person name="Fujimori Y."/>
            <person name="Komiyama M."/>
            <person name="Tashiro H."/>
            <person name="Tanigami A."/>
            <person name="Fujiwara T."/>
            <person name="Ono T."/>
            <person name="Yamada K."/>
            <person name="Fujii Y."/>
            <person name="Ozaki K."/>
            <person name="Hirao M."/>
            <person name="Ohmori Y."/>
            <person name="Kawabata A."/>
            <person name="Hikiji T."/>
            <person name="Kobatake N."/>
            <person name="Inagaki H."/>
            <person name="Ikema Y."/>
            <person name="Okamoto S."/>
            <person name="Okitani R."/>
            <person name="Kawakami T."/>
            <person name="Noguchi S."/>
            <person name="Itoh T."/>
            <person name="Shigeta K."/>
            <person name="Senba T."/>
            <person name="Matsumura K."/>
            <person name="Nakajima Y."/>
            <person name="Mizuno T."/>
            <person name="Morinaga M."/>
            <person name="Sasaki M."/>
            <person name="Togashi T."/>
            <person name="Oyama M."/>
            <person name="Hata H."/>
            <person name="Watanabe M."/>
            <person name="Komatsu T."/>
            <person name="Mizushima-Sugano J."/>
            <person name="Satoh T."/>
            <person name="Shirai Y."/>
            <person name="Takahashi Y."/>
            <person name="Nakagawa K."/>
            <person name="Okumura K."/>
            <person name="Nagase T."/>
            <person name="Nomura N."/>
            <person name="Kikuchi H."/>
            <person name="Masuho Y."/>
            <person name="Yamashita R."/>
            <person name="Nakai K."/>
            <person name="Yada T."/>
            <person name="Nakamura Y."/>
            <person name="Ohara O."/>
            <person name="Isogai T."/>
            <person name="Sugano S."/>
        </authorList>
    </citation>
    <scope>NUCLEOTIDE SEQUENCE [LARGE SCALE MRNA] (ISOFORM 6)</scope>
    <source>
        <tissue>Heart</tissue>
    </source>
</reference>
<reference key="9">
    <citation type="submission" date="2006-12" db="EMBL/GenBank/DDBJ databases">
        <authorList>
            <consortium name="NHLBI resequencing and genotyping service (RS&amp;G)"/>
        </authorList>
    </citation>
    <scope>NUCLEOTIDE SEQUENCE [GENOMIC DNA]</scope>
</reference>
<reference key="10">
    <citation type="journal article" date="2006" name="Nature">
        <title>The DNA sequence and biological annotation of human chromosome 1.</title>
        <authorList>
            <person name="Gregory S.G."/>
            <person name="Barlow K.F."/>
            <person name="McLay K.E."/>
            <person name="Kaul R."/>
            <person name="Swarbreck D."/>
            <person name="Dunham A."/>
            <person name="Scott C.E."/>
            <person name="Howe K.L."/>
            <person name="Woodfine K."/>
            <person name="Spencer C.C.A."/>
            <person name="Jones M.C."/>
            <person name="Gillson C."/>
            <person name="Searle S."/>
            <person name="Zhou Y."/>
            <person name="Kokocinski F."/>
            <person name="McDonald L."/>
            <person name="Evans R."/>
            <person name="Phillips K."/>
            <person name="Atkinson A."/>
            <person name="Cooper R."/>
            <person name="Jones C."/>
            <person name="Hall R.E."/>
            <person name="Andrews T.D."/>
            <person name="Lloyd C."/>
            <person name="Ainscough R."/>
            <person name="Almeida J.P."/>
            <person name="Ambrose K.D."/>
            <person name="Anderson F."/>
            <person name="Andrew R.W."/>
            <person name="Ashwell R.I.S."/>
            <person name="Aubin K."/>
            <person name="Babbage A.K."/>
            <person name="Bagguley C.L."/>
            <person name="Bailey J."/>
            <person name="Beasley H."/>
            <person name="Bethel G."/>
            <person name="Bird C.P."/>
            <person name="Bray-Allen S."/>
            <person name="Brown J.Y."/>
            <person name="Brown A.J."/>
            <person name="Buckley D."/>
            <person name="Burton J."/>
            <person name="Bye J."/>
            <person name="Carder C."/>
            <person name="Chapman J.C."/>
            <person name="Clark S.Y."/>
            <person name="Clarke G."/>
            <person name="Clee C."/>
            <person name="Cobley V."/>
            <person name="Collier R.E."/>
            <person name="Corby N."/>
            <person name="Coville G.J."/>
            <person name="Davies J."/>
            <person name="Deadman R."/>
            <person name="Dunn M."/>
            <person name="Earthrowl M."/>
            <person name="Ellington A.G."/>
            <person name="Errington H."/>
            <person name="Frankish A."/>
            <person name="Frankland J."/>
            <person name="French L."/>
            <person name="Garner P."/>
            <person name="Garnett J."/>
            <person name="Gay L."/>
            <person name="Ghori M.R.J."/>
            <person name="Gibson R."/>
            <person name="Gilby L.M."/>
            <person name="Gillett W."/>
            <person name="Glithero R.J."/>
            <person name="Grafham D.V."/>
            <person name="Griffiths C."/>
            <person name="Griffiths-Jones S."/>
            <person name="Grocock R."/>
            <person name="Hammond S."/>
            <person name="Harrison E.S.I."/>
            <person name="Hart E."/>
            <person name="Haugen E."/>
            <person name="Heath P.D."/>
            <person name="Holmes S."/>
            <person name="Holt K."/>
            <person name="Howden P.J."/>
            <person name="Hunt A.R."/>
            <person name="Hunt S.E."/>
            <person name="Hunter G."/>
            <person name="Isherwood J."/>
            <person name="James R."/>
            <person name="Johnson C."/>
            <person name="Johnson D."/>
            <person name="Joy A."/>
            <person name="Kay M."/>
            <person name="Kershaw J.K."/>
            <person name="Kibukawa M."/>
            <person name="Kimberley A.M."/>
            <person name="King A."/>
            <person name="Knights A.J."/>
            <person name="Lad H."/>
            <person name="Laird G."/>
            <person name="Lawlor S."/>
            <person name="Leongamornlert D.A."/>
            <person name="Lloyd D.M."/>
            <person name="Loveland J."/>
            <person name="Lovell J."/>
            <person name="Lush M.J."/>
            <person name="Lyne R."/>
            <person name="Martin S."/>
            <person name="Mashreghi-Mohammadi M."/>
            <person name="Matthews L."/>
            <person name="Matthews N.S.W."/>
            <person name="McLaren S."/>
            <person name="Milne S."/>
            <person name="Mistry S."/>
            <person name="Moore M.J.F."/>
            <person name="Nickerson T."/>
            <person name="O'Dell C.N."/>
            <person name="Oliver K."/>
            <person name="Palmeiri A."/>
            <person name="Palmer S.A."/>
            <person name="Parker A."/>
            <person name="Patel D."/>
            <person name="Pearce A.V."/>
            <person name="Peck A.I."/>
            <person name="Pelan S."/>
            <person name="Phelps K."/>
            <person name="Phillimore B.J."/>
            <person name="Plumb R."/>
            <person name="Rajan J."/>
            <person name="Raymond C."/>
            <person name="Rouse G."/>
            <person name="Saenphimmachak C."/>
            <person name="Sehra H.K."/>
            <person name="Sheridan E."/>
            <person name="Shownkeen R."/>
            <person name="Sims S."/>
            <person name="Skuce C.D."/>
            <person name="Smith M."/>
            <person name="Steward C."/>
            <person name="Subramanian S."/>
            <person name="Sycamore N."/>
            <person name="Tracey A."/>
            <person name="Tromans A."/>
            <person name="Van Helmond Z."/>
            <person name="Wall M."/>
            <person name="Wallis J.M."/>
            <person name="White S."/>
            <person name="Whitehead S.L."/>
            <person name="Wilkinson J.E."/>
            <person name="Willey D.L."/>
            <person name="Williams H."/>
            <person name="Wilming L."/>
            <person name="Wray P.W."/>
            <person name="Wu Z."/>
            <person name="Coulson A."/>
            <person name="Vaudin M."/>
            <person name="Sulston J.E."/>
            <person name="Durbin R.M."/>
            <person name="Hubbard T."/>
            <person name="Wooster R."/>
            <person name="Dunham I."/>
            <person name="Carter N.P."/>
            <person name="McVean G."/>
            <person name="Ross M.T."/>
            <person name="Harrow J."/>
            <person name="Olson M.V."/>
            <person name="Beck S."/>
            <person name="Rogers J."/>
            <person name="Bentley D.R."/>
        </authorList>
    </citation>
    <scope>NUCLEOTIDE SEQUENCE [LARGE SCALE GENOMIC DNA]</scope>
</reference>
<reference key="11">
    <citation type="journal article" date="2004" name="Genome Res.">
        <title>The status, quality, and expansion of the NIH full-length cDNA project: the Mammalian Gene Collection (MGC).</title>
        <authorList>
            <consortium name="The MGC Project Team"/>
        </authorList>
    </citation>
    <scope>NUCLEOTIDE SEQUENCE [LARGE SCALE MRNA] (ISOFORM 11)</scope>
    <source>
        <tissue>Uterus</tissue>
    </source>
</reference>
<reference key="12">
    <citation type="journal article" date="1998" name="J. Mol. Cell. Cardiol.">
        <title>Genomic organisation, alternative splicing and polymorphisms of the human cardiac troponin T gene.</title>
        <authorList>
            <person name="Farza H."/>
            <person name="Townsend P.J."/>
            <person name="Carrier L."/>
            <person name="Barton P.J."/>
            <person name="Mesnard L."/>
            <person name="Bahrend E."/>
            <person name="Forissier J.F."/>
            <person name="Fiszman M."/>
            <person name="Yacoub M.H."/>
            <person name="Schwartz K."/>
        </authorList>
    </citation>
    <scope>NUCLEOTIDE SEQUENCE [GENOMIC DNA] OF 191-229 AND 231-288</scope>
    <scope>ALTERNATIVE SPLICING</scope>
    <scope>VARIANT ARG-263</scope>
    <source>
        <tissue>Blood</tissue>
    </source>
</reference>
<reference key="13">
    <citation type="journal article" date="1995" name="Electrophoresis">
        <title>The major protein expression profile and two-dimensional protein database of human heart.</title>
        <authorList>
            <person name="Kovalyov L.I."/>
            <person name="Shishkin S.S."/>
            <person name="Efimochkin A.S."/>
            <person name="Kovalyova M.A."/>
            <person name="Ershova E.S."/>
            <person name="Egorov T.A."/>
            <person name="Musalyamov A.K."/>
        </authorList>
    </citation>
    <scope>PROTEIN SEQUENCE OF 70-76 AND 177-182</scope>
    <source>
        <tissue>Heart</tissue>
    </source>
</reference>
<reference key="14">
    <citation type="journal article" date="2003" name="Nature">
        <title>Structure of the core domain of human cardiac troponin in the Ca(2+)-saturated form.</title>
        <authorList>
            <person name="Takeda S."/>
            <person name="Yamashita A."/>
            <person name="Maeda K."/>
            <person name="Maeda Y."/>
        </authorList>
    </citation>
    <scope>X-RAY CRYSTALLOGRAPHY (2.61 ANGSTROMS) OF 193-298</scope>
</reference>
<reference key="15">
    <citation type="journal article" date="1994" name="Cell">
        <title>Alpha-tropomyosin and cardiac troponin T mutations cause familial hypertrophic cardiomyopathy: a disease of the sarcomere.</title>
        <authorList>
            <person name="Thierfelder L."/>
            <person name="Watkins H."/>
            <person name="Macrae C."/>
            <person name="Lamas R."/>
            <person name="McKenna W.J."/>
            <person name="Vosberg H.-P."/>
            <person name="Seidman J.G."/>
            <person name="Seidman C.E."/>
        </authorList>
    </citation>
    <scope>VARIANTS CMH2 ASN-89 AND GLN-102</scope>
</reference>
<reference key="16">
    <citation type="journal article" date="1995" name="N. Engl. J. Med.">
        <title>Mutations in the genes for cardiac troponin T and alpha-tropomyosin in hypertrophic cardiomyopathy.</title>
        <authorList>
            <person name="Watkins H."/>
            <person name="McKenna W.J."/>
            <person name="Thierfelder L."/>
            <person name="Suk H.J."/>
            <person name="Anan R."/>
            <person name="O'Donoghue A."/>
            <person name="Spirito P."/>
            <person name="Matsumori A."/>
            <person name="Moravec C.S."/>
            <person name="Seidman J.G."/>
            <person name="Seidman C.E."/>
        </authorList>
    </citation>
    <scope>VARIANTS CMH2 ILE-120; LYS-173; ASP-254 AND CYS-288</scope>
</reference>
<reference key="17">
    <citation type="journal article" date="1996" name="Circulation">
        <title>Codon 102 of the cardiac troponin T gene is a putative hot spot for mutations in familial hypertrophic cardiomyopathy.</title>
        <authorList>
            <person name="Forissier J.F."/>
            <person name="Carrier L."/>
            <person name="Farza H."/>
            <person name="Bonne G."/>
            <person name="Bercovici J."/>
            <person name="Richard P."/>
            <person name="Hainque B."/>
            <person name="Townsend P.J."/>
            <person name="Yacoub M.H."/>
            <person name="Faure S."/>
            <person name="Dubourg O."/>
            <person name="Millaire A."/>
            <person name="Hagege A.A."/>
            <person name="Desnos M."/>
            <person name="Komajda M."/>
            <person name="Schwartz K."/>
        </authorList>
    </citation>
    <scope>VARIANT CMH2 LEU-102</scope>
</reference>
<reference key="18">
    <citation type="journal article" date="1997" name="J. Am. Coll. Cardiol.">
        <title>Sudden death due to troponin T mutations.</title>
        <authorList>
            <person name="Moolman J.C."/>
            <person name="Corfield V.A."/>
            <person name="Posen B."/>
            <person name="Ngumbela K."/>
            <person name="Seidman C."/>
            <person name="Brink P.A."/>
            <person name="Watkins H."/>
        </authorList>
    </citation>
    <scope>VARIANT CMH2 TRP-102</scope>
</reference>
<reference key="19">
    <citation type="journal article" date="1998" name="Hum. Mutat.">
        <title>A novel missense Arg 278 Pro mutation in the troponin T gene (TNNT2).</title>
        <authorList>
            <person name="Erdmann J."/>
            <person name="Wischke S."/>
            <person name="Kallisch H."/>
            <person name="Riedel K."/>
            <person name="Heidenreich M."/>
            <person name="Fleck E."/>
            <person name="Regitz-Zagrosek V."/>
        </authorList>
    </citation>
    <scope>VARIANT CMH2 PRO-288</scope>
</reference>
<reference key="20">
    <citation type="journal article" date="1999" name="Heart">
        <title>A new mutation of the cardiac troponin T gene causing familial hypertrophic cardiomyopathy without left ventricular hypertrophy.</title>
        <authorList>
            <person name="Varnava A."/>
            <person name="Baboonian C."/>
            <person name="Davison F."/>
            <person name="de Cruz L."/>
            <person name="Elliott P.M."/>
            <person name="Davies M.J."/>
            <person name="McKenna W.J."/>
        </authorList>
    </citation>
    <scope>VARIANT CMH2 LEU-104</scope>
</reference>
<reference key="21">
    <citation type="journal article" date="1997" name="J. Mol. Cell. Cardiol.">
        <title>Novel missense mutation in cardiac troponin T gene found in Japanese patient with hypertrophic cardiomyopathy.</title>
        <authorList>
            <person name="Nakajima-Taniguchi C."/>
            <person name="Matsui H."/>
            <person name="Fujio Y."/>
            <person name="Nagata S."/>
            <person name="Kishimoto T."/>
            <person name="Yamauchi-Takihara K."/>
        </authorList>
    </citation>
    <scope>VARIANT CMH2 VAL-114</scope>
</reference>
<reference key="22">
    <citation type="journal article" date="2000" name="Circulation">
        <title>Homozygous mutation in cardiac troponin T: implications for hypertrophic cardiomyopathy.</title>
        <authorList>
            <person name="Ho C.Y."/>
            <person name="Lever H.M."/>
            <person name="DeSanctis R."/>
            <person name="Farver C.F."/>
            <person name="Seidman J.G."/>
            <person name="Seidman C.E."/>
        </authorList>
    </citation>
    <scope>VARIANT CMH2 PHE-189</scope>
</reference>
<reference key="23">
    <citation type="journal article" date="2000" name="N. Engl. J. Med.">
        <title>Mutations in sarcomere protein genes as a cause of dilated cardiomyopathy.</title>
        <authorList>
            <person name="Kamisago M."/>
            <person name="Sharma S.D."/>
            <person name="DePalma S.R."/>
            <person name="Solomon S."/>
            <person name="Sharma P."/>
            <person name="McDonough B."/>
            <person name="Smoot L."/>
            <person name="Mullen M.P."/>
            <person name="Woolf P.K."/>
            <person name="Wigle E.D."/>
            <person name="Seidman J.G."/>
            <person name="Seidman C.E."/>
        </authorList>
    </citation>
    <scope>VARIANT CMD1D LYS-210 DEL</scope>
</reference>
<reference key="24">
    <citation type="journal article" date="2001" name="Circulation">
        <title>Novel cardiac troponin T mutation as a cause of familial dilated cardiomyopathy.</title>
        <authorList>
            <person name="Li D."/>
            <person name="Czernuszewicz G.Z."/>
            <person name="Gonzalez O."/>
            <person name="Tapscott T."/>
            <person name="Karibe A."/>
            <person name="Durand J.B."/>
            <person name="Brugada R."/>
            <person name="Hill R."/>
            <person name="Gregoritch J.M."/>
            <person name="Anderson J.L."/>
            <person name="Quinones M."/>
            <person name="Bachinski L.L."/>
            <person name="Roberts R."/>
        </authorList>
    </citation>
    <scope>VARIANT CMD1D TRP-151</scope>
</reference>
<reference key="25">
    <citation type="journal article" date="2003" name="Circulation">
        <title>Hypertrophic cardiomyopathy: distribution of disease genes, spectrum of mutations, and implications for a molecular diagnosis strategy.</title>
        <authorList>
            <person name="Richard P."/>
            <person name="Charron P."/>
            <person name="Carrier L."/>
            <person name="Ledeuil C."/>
            <person name="Cheav T."/>
            <person name="Pichereau C."/>
            <person name="Benaiche A."/>
            <person name="Isnard R."/>
            <person name="Dubourg O."/>
            <person name="Burban M."/>
            <person name="Gueffet J.-P."/>
            <person name="Millaire A."/>
            <person name="Desnos M."/>
            <person name="Schwartz K."/>
            <person name="Hainque B."/>
            <person name="Komajda M."/>
        </authorList>
    </citation>
    <scope>VARIANTS CMH2 LEU-80; VAL-120; ILE-281 AND CYS-296</scope>
</reference>
<reference key="26">
    <citation type="journal article" date="2004" name="Circulation">
        <authorList>
            <person name="Richard P."/>
            <person name="Charron P."/>
            <person name="Carrier L."/>
            <person name="Ledeuil C."/>
            <person name="Cheav T."/>
            <person name="Pichereau C."/>
            <person name="Benaiche A."/>
            <person name="Isnard R."/>
            <person name="Dubourg O."/>
            <person name="Burban M."/>
            <person name="Gueffet J.-P."/>
            <person name="Millaire A."/>
            <person name="Desnos M."/>
            <person name="Schwartz K."/>
            <person name="Hainque B."/>
            <person name="Komajda M."/>
        </authorList>
    </citation>
    <scope>ERRATUM OF PUBMED:12707239</scope>
</reference>
<reference key="27">
    <citation type="journal article" date="2003" name="Clin. Genet.">
        <title>Mutation spectrum in a large cohort of unrelated consecutive patients with hypertrophic cardiomyopathy.</title>
        <authorList>
            <person name="Erdmann J."/>
            <person name="Daehmlow S."/>
            <person name="Wischke S."/>
            <person name="Senyuva M."/>
            <person name="Werner U."/>
            <person name="Raible J."/>
            <person name="Tanis N."/>
            <person name="Dyachenko S."/>
            <person name="Hummel M."/>
            <person name="Hetzer R."/>
            <person name="Regitz-Zagrosek V."/>
        </authorList>
    </citation>
    <scope>VARIANT CMH2 PRO-288</scope>
</reference>
<reference key="28">
    <citation type="journal article" date="2004" name="J. Am. Coll. Cardiol.">
        <title>Severe disease expression of cardiac troponin C and T mutations in patients with idiopathic dilated cardiomyopathy.</title>
        <authorList>
            <person name="Mogensen J."/>
            <person name="Murphy R.T."/>
            <person name="Shaw T."/>
            <person name="Bahl A."/>
            <person name="Redwood C."/>
            <person name="Watkins H."/>
            <person name="Burke M."/>
            <person name="Elliott P.M."/>
            <person name="McKenna W.J."/>
        </authorList>
    </citation>
    <scope>VARIANTS CMD1D TRP-141; LEU-215 AND LYS-220 DEL</scope>
</reference>
<reference key="29">
    <citation type="journal article" date="2005" name="Clin. Chim. Acta">
        <title>Mutations profile in Chinese patients with hypertrophic cardiomyopathy.</title>
        <authorList>
            <person name="Song L."/>
            <person name="Zou Y."/>
            <person name="Wang J."/>
            <person name="Wang Z."/>
            <person name="Zhen Y."/>
            <person name="Lou K."/>
            <person name="Zhang Q."/>
            <person name="Wang X."/>
            <person name="Wang H."/>
            <person name="Li J."/>
            <person name="Hui R."/>
        </authorList>
    </citation>
    <scope>VARIANT CMH2 CYS-140</scope>
</reference>
<reference key="30">
    <citation type="journal article" date="2005" name="Eur. Heart J.">
        <title>Mutation screening in dilated cardiomyopathy: prominent role of the beta myosin heavy chain gene.</title>
        <authorList>
            <person name="Villard E."/>
            <person name="Duboscq-Bidot L."/>
            <person name="Charron P."/>
            <person name="Benaiche A."/>
            <person name="Conraads V."/>
            <person name="Sylvius N."/>
            <person name="Komajda M."/>
        </authorList>
    </citation>
    <scope>VARIANT CMD1D TRP-151</scope>
</reference>
<reference key="31">
    <citation type="journal article" date="2005" name="J. Med. Genet.">
        <title>Compound and double mutations in patients with hypertrophic cardiomyopathy: implications for genetic testing and counselling.</title>
        <authorList>
            <person name="Ingles J."/>
            <person name="Doolan A."/>
            <person name="Chiu C."/>
            <person name="Seidman J."/>
            <person name="Seidman C."/>
            <person name="Semsarian C."/>
        </authorList>
    </citation>
    <scope>VARIANT CMH2 CYS-288</scope>
</reference>
<reference key="32">
    <citation type="journal article" date="2006" name="Pediatrics">
        <title>Infantile restrictive cardiomyopathy resulting from a mutation in the cardiac troponin T gene.</title>
        <authorList>
            <person name="Peddy S.B."/>
            <person name="Vricella L.A."/>
            <person name="Crosson J.E."/>
            <person name="Oswald G.L."/>
            <person name="Cohn R.D."/>
            <person name="Cameron D.E."/>
            <person name="Valle D."/>
            <person name="Loeys B.L."/>
        </authorList>
    </citation>
    <scope>INVOLVEMENT IN RCM3</scope>
</reference>
<reference key="33">
    <citation type="journal article" date="2011" name="Eur. J. Med. Genet.">
        <title>Clinical and mutational spectrum in a cohort of 105 unrelated patients with dilated cardiomyopathy.</title>
        <authorList>
            <person name="Millat G."/>
            <person name="Bouvagnet P."/>
            <person name="Chevalier P."/>
            <person name="Sebbag L."/>
            <person name="Dulac A."/>
            <person name="Dauphin C."/>
            <person name="Jouk P.S."/>
            <person name="Delrue M.A."/>
            <person name="Thambo J.B."/>
            <person name="Le Metayer P."/>
            <person name="Seronde M.F."/>
            <person name="Faivre L."/>
            <person name="Eicher J.C."/>
            <person name="Rousson R."/>
        </authorList>
    </citation>
    <scope>VARIANTS CMH2 VAL-38 AND CYS-288</scope>
    <scope>VARIANTS CMD1D TRP-141 AND LYS-220 DEL</scope>
</reference>
<organism>
    <name type="scientific">Homo sapiens</name>
    <name type="common">Human</name>
    <dbReference type="NCBI Taxonomy" id="9606"/>
    <lineage>
        <taxon>Eukaryota</taxon>
        <taxon>Metazoa</taxon>
        <taxon>Chordata</taxon>
        <taxon>Craniata</taxon>
        <taxon>Vertebrata</taxon>
        <taxon>Euteleostomi</taxon>
        <taxon>Mammalia</taxon>
        <taxon>Eutheria</taxon>
        <taxon>Euarchontoglires</taxon>
        <taxon>Primates</taxon>
        <taxon>Haplorrhini</taxon>
        <taxon>Catarrhini</taxon>
        <taxon>Hominidae</taxon>
        <taxon>Homo</taxon>
    </lineage>
</organism>
<accession>P45379</accession>
<accession>A2TDB9</accession>
<accession>A8K3K6</accession>
<accession>O60214</accession>
<accession>Q99596</accession>
<accession>Q99597</accession>
<accession>Q9BUF6</accession>
<accession>Q9UM96</accession>
<dbReference type="EMBL" id="S64668">
    <property type="protein sequence ID" value="AAB27731.1"/>
    <property type="status" value="ALT_SEQ"/>
    <property type="molecule type" value="mRNA"/>
</dbReference>
<dbReference type="EMBL" id="X74819">
    <property type="protein sequence ID" value="CAA52818.1"/>
    <property type="molecule type" value="mRNA"/>
</dbReference>
<dbReference type="EMBL" id="L40162">
    <property type="protein sequence ID" value="AAA67422.1"/>
    <property type="molecule type" value="mRNA"/>
</dbReference>
<dbReference type="EMBL" id="X79855">
    <property type="protein sequence ID" value="CAA56235.1"/>
    <property type="molecule type" value="mRNA"/>
</dbReference>
<dbReference type="EMBL" id="X79856">
    <property type="protein sequence ID" value="CAA56236.1"/>
    <property type="molecule type" value="mRNA"/>
</dbReference>
<dbReference type="EMBL" id="X79857">
    <property type="protein sequence ID" value="CAA56237.1"/>
    <property type="molecule type" value="mRNA"/>
</dbReference>
<dbReference type="EMBL" id="X79858">
    <property type="protein sequence ID" value="CAA56238.1"/>
    <property type="molecule type" value="mRNA"/>
</dbReference>
<dbReference type="EMBL" id="AF004422">
    <property type="protein sequence ID" value="AAC39590.1"/>
    <property type="molecule type" value="Genomic_DNA"/>
</dbReference>
<dbReference type="EMBL" id="AF004409">
    <property type="protein sequence ID" value="AAC39590.1"/>
    <property type="status" value="JOINED"/>
    <property type="molecule type" value="Genomic_DNA"/>
</dbReference>
<dbReference type="EMBL" id="AF004410">
    <property type="protein sequence ID" value="AAC39590.1"/>
    <property type="status" value="JOINED"/>
    <property type="molecule type" value="Genomic_DNA"/>
</dbReference>
<dbReference type="EMBL" id="AF004411">
    <property type="protein sequence ID" value="AAC39590.1"/>
    <property type="status" value="JOINED"/>
    <property type="molecule type" value="Genomic_DNA"/>
</dbReference>
<dbReference type="EMBL" id="AF004412">
    <property type="protein sequence ID" value="AAC39590.1"/>
    <property type="status" value="JOINED"/>
    <property type="molecule type" value="Genomic_DNA"/>
</dbReference>
<dbReference type="EMBL" id="AF004413">
    <property type="protein sequence ID" value="AAC39590.1"/>
    <property type="status" value="JOINED"/>
    <property type="molecule type" value="Genomic_DNA"/>
</dbReference>
<dbReference type="EMBL" id="AF004414">
    <property type="protein sequence ID" value="AAC39590.1"/>
    <property type="status" value="JOINED"/>
    <property type="molecule type" value="Genomic_DNA"/>
</dbReference>
<dbReference type="EMBL" id="AF004415">
    <property type="protein sequence ID" value="AAC39590.1"/>
    <property type="status" value="JOINED"/>
    <property type="molecule type" value="Genomic_DNA"/>
</dbReference>
<dbReference type="EMBL" id="AF004416">
    <property type="protein sequence ID" value="AAC39590.1"/>
    <property type="status" value="JOINED"/>
    <property type="molecule type" value="Genomic_DNA"/>
</dbReference>
<dbReference type="EMBL" id="AF004417">
    <property type="protein sequence ID" value="AAC39590.1"/>
    <property type="status" value="JOINED"/>
    <property type="molecule type" value="Genomic_DNA"/>
</dbReference>
<dbReference type="EMBL" id="AF004418">
    <property type="protein sequence ID" value="AAC39590.1"/>
    <property type="status" value="JOINED"/>
    <property type="molecule type" value="Genomic_DNA"/>
</dbReference>
<dbReference type="EMBL" id="AF004419">
    <property type="protein sequence ID" value="AAC39590.1"/>
    <property type="status" value="JOINED"/>
    <property type="molecule type" value="Genomic_DNA"/>
</dbReference>
<dbReference type="EMBL" id="AF004420">
    <property type="protein sequence ID" value="AAC39590.1"/>
    <property type="status" value="JOINED"/>
    <property type="molecule type" value="Genomic_DNA"/>
</dbReference>
<dbReference type="EMBL" id="AF004421">
    <property type="protein sequence ID" value="AAC39590.1"/>
    <property type="status" value="JOINED"/>
    <property type="molecule type" value="Genomic_DNA"/>
</dbReference>
<dbReference type="EMBL" id="AY044273">
    <property type="protein sequence ID" value="AAK92231.1"/>
    <property type="molecule type" value="Genomic_DNA"/>
</dbReference>
<dbReference type="EMBL" id="AK290621">
    <property type="protein sequence ID" value="BAF83310.1"/>
    <property type="molecule type" value="mRNA"/>
</dbReference>
<dbReference type="EMBL" id="EF179183">
    <property type="protein sequence ID" value="ABN05286.1"/>
    <property type="molecule type" value="Genomic_DNA"/>
</dbReference>
<dbReference type="EMBL" id="AC119427">
    <property type="status" value="NOT_ANNOTATED_CDS"/>
    <property type="molecule type" value="Genomic_DNA"/>
</dbReference>
<dbReference type="EMBL" id="BC002653">
    <property type="protein sequence ID" value="AAH02653.1"/>
    <property type="molecule type" value="mRNA"/>
</dbReference>
<dbReference type="EMBL" id="Y09626">
    <property type="protein sequence ID" value="CAA70839.1"/>
    <property type="molecule type" value="Genomic_DNA"/>
</dbReference>
<dbReference type="EMBL" id="Y09627">
    <property type="protein sequence ID" value="CAA70840.1"/>
    <property type="molecule type" value="Genomic_DNA"/>
</dbReference>
<dbReference type="EMBL" id="Y09628">
    <property type="protein sequence ID" value="CAA70841.1"/>
    <property type="molecule type" value="Genomic_DNA"/>
</dbReference>
<dbReference type="EMBL" id="S71126">
    <property type="protein sequence ID" value="AAB30956.1"/>
    <property type="molecule type" value="mRNA"/>
</dbReference>
<dbReference type="EMBL" id="S71127">
    <property type="protein sequence ID" value="AAB30957.1"/>
    <property type="molecule type" value="Genomic_DNA"/>
</dbReference>
<dbReference type="EMBL" id="S71128">
    <property type="protein sequence ID" value="AAB30957.1"/>
    <property type="status" value="JOINED"/>
    <property type="molecule type" value="Genomic_DNA"/>
</dbReference>
<dbReference type="CCDS" id="CCDS30968.1">
    <molecule id="P45379-11"/>
</dbReference>
<dbReference type="CCDS" id="CCDS30969.1">
    <molecule id="P45379-6"/>
</dbReference>
<dbReference type="CCDS" id="CCDS60390.1">
    <molecule id="P45379-12"/>
</dbReference>
<dbReference type="CCDS" id="CCDS73003.1">
    <molecule id="P45379-1"/>
</dbReference>
<dbReference type="PIR" id="A54671">
    <property type="entry name" value="TPHUTC"/>
</dbReference>
<dbReference type="RefSeq" id="NP_000355.2">
    <molecule id="P45379-10"/>
    <property type="nucleotide sequence ID" value="NM_000364.3"/>
</dbReference>
<dbReference type="RefSeq" id="NP_001001430.1">
    <molecule id="P45379-6"/>
    <property type="nucleotide sequence ID" value="NM_001001430.3"/>
</dbReference>
<dbReference type="RefSeq" id="NP_001001431.1">
    <molecule id="P45379-11"/>
    <property type="nucleotide sequence ID" value="NM_001001431.3"/>
</dbReference>
<dbReference type="RefSeq" id="NP_001001432.1">
    <property type="nucleotide sequence ID" value="NM_001001432.2"/>
</dbReference>
<dbReference type="RefSeq" id="NP_001263274.1">
    <molecule id="P45379-1"/>
    <property type="nucleotide sequence ID" value="NM_001276345.2"/>
</dbReference>
<dbReference type="RefSeq" id="NP_001263275.1">
    <molecule id="P45379-12"/>
    <property type="nucleotide sequence ID" value="NM_001276346.2"/>
</dbReference>
<dbReference type="RefSeq" id="NP_001263276.1">
    <molecule id="P45379-6"/>
    <property type="nucleotide sequence ID" value="NM_001276347.2"/>
</dbReference>
<dbReference type="RefSeq" id="NP_001393652.1">
    <molecule id="P45379-10"/>
    <property type="nucleotide sequence ID" value="NM_001406723.1"/>
</dbReference>
<dbReference type="RefSeq" id="NP_001393653.1">
    <molecule id="P45379-6"/>
    <property type="nucleotide sequence ID" value="NM_001406724.1"/>
</dbReference>
<dbReference type="RefSeq" id="NP_001393655.1">
    <molecule id="P45379-11"/>
    <property type="nucleotide sequence ID" value="NM_001406726.1"/>
</dbReference>
<dbReference type="RefSeq" id="NP_001393656.1">
    <molecule id="P45379-11"/>
    <property type="nucleotide sequence ID" value="NM_001406727.1"/>
</dbReference>
<dbReference type="RefSeq" id="NP_001393657.1">
    <molecule id="P45379-7"/>
    <property type="nucleotide sequence ID" value="NM_001406728.1"/>
</dbReference>
<dbReference type="RefSeq" id="XP_006711571.1">
    <property type="nucleotide sequence ID" value="XM_006711508.3"/>
</dbReference>
<dbReference type="RefSeq" id="XP_011508240.1">
    <molecule id="P45379-1"/>
    <property type="nucleotide sequence ID" value="XM_011509938.3"/>
</dbReference>
<dbReference type="RefSeq" id="XP_011508241.1">
    <molecule id="P45379-3"/>
    <property type="nucleotide sequence ID" value="XM_011509939.2"/>
</dbReference>
<dbReference type="RefSeq" id="XP_011508242.1">
    <molecule id="P45379-5"/>
    <property type="nucleotide sequence ID" value="XM_011509940.3"/>
</dbReference>
<dbReference type="RefSeq" id="XP_011508244.1">
    <property type="nucleotide sequence ID" value="XM_011509942.2"/>
</dbReference>
<dbReference type="RefSeq" id="XP_011508245.1">
    <molecule id="P45379-7"/>
    <property type="nucleotide sequence ID" value="XM_011509943.3"/>
</dbReference>
<dbReference type="RefSeq" id="XP_016857706.1">
    <property type="nucleotide sequence ID" value="XM_017002217.1"/>
</dbReference>
<dbReference type="RefSeq" id="XP_054194545.1">
    <molecule id="P45379-1"/>
    <property type="nucleotide sequence ID" value="XM_054338570.1"/>
</dbReference>
<dbReference type="RefSeq" id="XP_054194546.1">
    <molecule id="P45379-5"/>
    <property type="nucleotide sequence ID" value="XM_054338571.1"/>
</dbReference>
<dbReference type="RefSeq" id="XP_054194547.1">
    <molecule id="P45379-3"/>
    <property type="nucleotide sequence ID" value="XM_054338572.1"/>
</dbReference>
<dbReference type="RefSeq" id="XP_054194549.1">
    <molecule id="P45379-7"/>
    <property type="nucleotide sequence ID" value="XM_054338574.1"/>
</dbReference>
<dbReference type="PDB" id="1J1D">
    <property type="method" value="X-ray"/>
    <property type="resolution" value="2.61 A"/>
    <property type="chains" value="B/E=193-298"/>
</dbReference>
<dbReference type="PDB" id="1J1E">
    <property type="method" value="X-ray"/>
    <property type="resolution" value="3.30 A"/>
    <property type="chains" value="B/E=193-298"/>
</dbReference>
<dbReference type="PDB" id="4Y99">
    <property type="method" value="X-ray"/>
    <property type="resolution" value="2.00 A"/>
    <property type="chains" value="B=193-298"/>
</dbReference>
<dbReference type="PDB" id="6KN7">
    <property type="method" value="EM"/>
    <property type="resolution" value="6.60 A"/>
    <property type="chains" value="T/a=97-282"/>
</dbReference>
<dbReference type="PDB" id="6KN8">
    <property type="method" value="EM"/>
    <property type="resolution" value="4.80 A"/>
    <property type="chains" value="T/a=109-282"/>
</dbReference>
<dbReference type="PDB" id="7UTI">
    <property type="method" value="EM"/>
    <property type="resolution" value="4.80 A"/>
    <property type="chains" value="X/Y/c/d=1-298"/>
</dbReference>
<dbReference type="PDB" id="7UTL">
    <property type="method" value="EM"/>
    <property type="resolution" value="6.60 A"/>
    <property type="chains" value="X/Y/e/f=1-298"/>
</dbReference>
<dbReference type="PDB" id="8FMM">
    <property type="method" value="X-ray"/>
    <property type="resolution" value="3.11 A"/>
    <property type="chains" value="B/E=193-298"/>
</dbReference>
<dbReference type="PDB" id="8FMN">
    <property type="method" value="X-ray"/>
    <property type="resolution" value="3.10 A"/>
    <property type="chains" value="B/E=193-298"/>
</dbReference>
<dbReference type="PDB" id="8FMO">
    <property type="method" value="X-ray"/>
    <property type="resolution" value="2.61 A"/>
    <property type="chains" value="B/E=193-298"/>
</dbReference>
<dbReference type="PDB" id="8FMP">
    <property type="method" value="X-ray"/>
    <property type="resolution" value="3.24 A"/>
    <property type="chains" value="B/E=193-298"/>
</dbReference>
<dbReference type="PDB" id="8FMQ">
    <property type="method" value="X-ray"/>
    <property type="resolution" value="3.25 A"/>
    <property type="chains" value="B/E=193-298"/>
</dbReference>
<dbReference type="PDB" id="8FMR">
    <property type="method" value="X-ray"/>
    <property type="resolution" value="3.24 A"/>
    <property type="chains" value="B/E=193-298"/>
</dbReference>
<dbReference type="PDB" id="8FMS">
    <property type="method" value="X-ray"/>
    <property type="resolution" value="3.44 A"/>
    <property type="chains" value="B/E=193-298"/>
</dbReference>
<dbReference type="PDB" id="8FMT">
    <property type="method" value="X-ray"/>
    <property type="resolution" value="2.80 A"/>
    <property type="chains" value="B/E=193-298"/>
</dbReference>
<dbReference type="PDBsum" id="1J1D"/>
<dbReference type="PDBsum" id="1J1E"/>
<dbReference type="PDBsum" id="4Y99"/>
<dbReference type="PDBsum" id="6KN7"/>
<dbReference type="PDBsum" id="6KN8"/>
<dbReference type="PDBsum" id="7UTI"/>
<dbReference type="PDBsum" id="7UTL"/>
<dbReference type="PDBsum" id="8FMM"/>
<dbReference type="PDBsum" id="8FMN"/>
<dbReference type="PDBsum" id="8FMO"/>
<dbReference type="PDBsum" id="8FMP"/>
<dbReference type="PDBsum" id="8FMQ"/>
<dbReference type="PDBsum" id="8FMR"/>
<dbReference type="PDBsum" id="8FMS"/>
<dbReference type="PDBsum" id="8FMT"/>
<dbReference type="EMDB" id="EMD-0728"/>
<dbReference type="EMDB" id="EMD-0729"/>
<dbReference type="SMR" id="P45379"/>
<dbReference type="BioGRID" id="112993">
    <property type="interactions" value="15"/>
</dbReference>
<dbReference type="ComplexPortal" id="CPX-3280">
    <property type="entry name" value="Cardiac Troponin complex"/>
</dbReference>
<dbReference type="CORUM" id="P45379"/>
<dbReference type="FunCoup" id="P45379">
    <property type="interactions" value="223"/>
</dbReference>
<dbReference type="IntAct" id="P45379">
    <property type="interactions" value="9"/>
</dbReference>
<dbReference type="MINT" id="P45379"/>
<dbReference type="STRING" id="9606.ENSP00000499593"/>
<dbReference type="ChEMBL" id="CHEMBL2095202"/>
<dbReference type="GlyGen" id="P45379">
    <property type="glycosylation" value="1 site, 1 O-linked glycan (1 site)"/>
</dbReference>
<dbReference type="iPTMnet" id="P45379"/>
<dbReference type="PhosphoSitePlus" id="P45379"/>
<dbReference type="BioMuta" id="TNNT2"/>
<dbReference type="DMDM" id="21264536"/>
<dbReference type="MassIVE" id="P45379"/>
<dbReference type="PaxDb" id="9606-ENSP00000236918"/>
<dbReference type="PeptideAtlas" id="P45379"/>
<dbReference type="ProteomicsDB" id="55665">
    <molecule id="P45379-1"/>
</dbReference>
<dbReference type="ProteomicsDB" id="55666">
    <molecule id="P45379-10"/>
</dbReference>
<dbReference type="ProteomicsDB" id="55667">
    <molecule id="P45379-11"/>
</dbReference>
<dbReference type="ProteomicsDB" id="55668">
    <molecule id="P45379-2"/>
</dbReference>
<dbReference type="ProteomicsDB" id="55669">
    <molecule id="P45379-3"/>
</dbReference>
<dbReference type="ProteomicsDB" id="55670">
    <molecule id="P45379-4"/>
</dbReference>
<dbReference type="ProteomicsDB" id="55671">
    <molecule id="P45379-5"/>
</dbReference>
<dbReference type="ProteomicsDB" id="55672">
    <molecule id="P45379-6"/>
</dbReference>
<dbReference type="ProteomicsDB" id="55673">
    <molecule id="P45379-7"/>
</dbReference>
<dbReference type="ProteomicsDB" id="55674">
    <molecule id="P45379-8"/>
</dbReference>
<dbReference type="ProteomicsDB" id="55675">
    <molecule id="P45379-9"/>
</dbReference>
<dbReference type="ABCD" id="P45379">
    <property type="antibodies" value="10 sequenced antibodies"/>
</dbReference>
<dbReference type="Antibodypedia" id="4204">
    <property type="antibodies" value="1245 antibodies from 44 providers"/>
</dbReference>
<dbReference type="CPTC" id="P45379">
    <property type="antibodies" value="1 antibody"/>
</dbReference>
<dbReference type="DNASU" id="7139"/>
<dbReference type="Ensembl" id="ENST00000367318.10">
    <molecule id="P45379-6"/>
    <property type="protein sequence ID" value="ENSP00000356287.5"/>
    <property type="gene ID" value="ENSG00000118194.22"/>
</dbReference>
<dbReference type="Ensembl" id="ENST00000367320.6">
    <molecule id="P45379-12"/>
    <property type="protein sequence ID" value="ENSP00000356289.2"/>
    <property type="gene ID" value="ENSG00000118194.22"/>
</dbReference>
<dbReference type="Ensembl" id="ENST00000412633.3">
    <molecule id="P45379-11"/>
    <property type="protein sequence ID" value="ENSP00000408731.2"/>
    <property type="gene ID" value="ENSG00000118194.22"/>
</dbReference>
<dbReference type="Ensembl" id="ENST00000422165.6">
    <molecule id="P45379-10"/>
    <property type="protein sequence ID" value="ENSP00000395163.2"/>
    <property type="gene ID" value="ENSG00000118194.22"/>
</dbReference>
<dbReference type="Ensembl" id="ENST00000455702.7">
    <molecule id="P45379-8"/>
    <property type="protein sequence ID" value="ENSP00000402238.3"/>
    <property type="gene ID" value="ENSG00000118194.22"/>
</dbReference>
<dbReference type="Ensembl" id="ENST00000509001.5">
    <molecule id="P45379-6"/>
    <property type="protein sequence ID" value="ENSP00000422031.1"/>
    <property type="gene ID" value="ENSG00000118194.22"/>
</dbReference>
<dbReference type="Ensembl" id="ENST00000656932.1">
    <molecule id="P45379-1"/>
    <property type="protein sequence ID" value="ENSP00000499593.1"/>
    <property type="gene ID" value="ENSG00000118194.22"/>
</dbReference>
<dbReference type="Ensembl" id="ENST00000660295.1">
    <molecule id="P45379-6"/>
    <property type="protein sequence ID" value="ENSP00000499418.1"/>
    <property type="gene ID" value="ENSG00000118194.22"/>
</dbReference>
<dbReference type="Ensembl" id="ENST00000714314.1">
    <molecule id="P45379-1"/>
    <property type="protein sequence ID" value="ENSP00000519590.1"/>
    <property type="gene ID" value="ENSG00000118194.22"/>
</dbReference>
<dbReference type="GeneID" id="7139"/>
<dbReference type="KEGG" id="hsa:7139"/>
<dbReference type="MANE-Select" id="ENST00000656932.1">
    <property type="protein sequence ID" value="ENSP00000499593.1"/>
    <property type="RefSeq nucleotide sequence ID" value="NM_001276345.2"/>
    <property type="RefSeq protein sequence ID" value="NP_001263274.1"/>
</dbReference>
<dbReference type="UCSC" id="uc001gwg.5">
    <molecule id="P45379-1"/>
    <property type="organism name" value="human"/>
</dbReference>
<dbReference type="AGR" id="HGNC:11949"/>
<dbReference type="CTD" id="7139"/>
<dbReference type="DisGeNET" id="7139"/>
<dbReference type="GeneCards" id="TNNT2"/>
<dbReference type="GeneReviews" id="TNNT2"/>
<dbReference type="HGNC" id="HGNC:11949">
    <property type="gene designation" value="TNNT2"/>
</dbReference>
<dbReference type="HPA" id="ENSG00000118194">
    <property type="expression patterns" value="Tissue enriched (heart)"/>
</dbReference>
<dbReference type="MalaCards" id="TNNT2"/>
<dbReference type="MIM" id="115195">
    <property type="type" value="phenotype"/>
</dbReference>
<dbReference type="MIM" id="191045">
    <property type="type" value="gene"/>
</dbReference>
<dbReference type="MIM" id="601494">
    <property type="type" value="phenotype"/>
</dbReference>
<dbReference type="MIM" id="612422">
    <property type="type" value="phenotype"/>
</dbReference>
<dbReference type="neXtProt" id="NX_P45379"/>
<dbReference type="OpenTargets" id="ENSG00000118194"/>
<dbReference type="Orphanet" id="154">
    <property type="disease" value="Familial isolated dilated cardiomyopathy"/>
</dbReference>
<dbReference type="Orphanet" id="75249">
    <property type="disease" value="Familial isolated restrictive cardiomyopathy"/>
</dbReference>
<dbReference type="Orphanet" id="54260">
    <property type="disease" value="Left ventricular noncompaction"/>
</dbReference>
<dbReference type="PharmGKB" id="PA36638"/>
<dbReference type="VEuPathDB" id="HostDB:ENSG00000118194"/>
<dbReference type="eggNOG" id="KOG3634">
    <property type="taxonomic scope" value="Eukaryota"/>
</dbReference>
<dbReference type="GeneTree" id="ENSGT00940000154709"/>
<dbReference type="InParanoid" id="P45379"/>
<dbReference type="OMA" id="RIXEERA"/>
<dbReference type="OrthoDB" id="330499at2759"/>
<dbReference type="PAN-GO" id="P45379">
    <property type="GO annotations" value="6 GO annotations based on evolutionary models"/>
</dbReference>
<dbReference type="PhylomeDB" id="P45379"/>
<dbReference type="TreeFam" id="TF313321"/>
<dbReference type="PathwayCommons" id="P45379"/>
<dbReference type="Reactome" id="R-HSA-390522">
    <property type="pathway name" value="Striated Muscle Contraction"/>
</dbReference>
<dbReference type="SignaLink" id="P45379"/>
<dbReference type="SIGNOR" id="P45379"/>
<dbReference type="BioGRID-ORCS" id="7139">
    <property type="hits" value="299 hits in 1145 CRISPR screens"/>
</dbReference>
<dbReference type="ChiTaRS" id="TNNT2">
    <property type="organism name" value="human"/>
</dbReference>
<dbReference type="EvolutionaryTrace" id="P45379"/>
<dbReference type="GeneWiki" id="TNNT2"/>
<dbReference type="GenomeRNAi" id="7139"/>
<dbReference type="Pharos" id="P45379">
    <property type="development level" value="Tbio"/>
</dbReference>
<dbReference type="PRO" id="PR:P45379"/>
<dbReference type="Proteomes" id="UP000005640">
    <property type="component" value="Chromosome 1"/>
</dbReference>
<dbReference type="RNAct" id="P45379">
    <property type="molecule type" value="protein"/>
</dbReference>
<dbReference type="Bgee" id="ENSG00000118194">
    <property type="expression patterns" value="Expressed in apex of heart and 94 other cell types or tissues"/>
</dbReference>
<dbReference type="ExpressionAtlas" id="P45379">
    <property type="expression patterns" value="baseline and differential"/>
</dbReference>
<dbReference type="GO" id="GO:0097512">
    <property type="term" value="C:cardiac myofibril"/>
    <property type="evidence" value="ECO:0000314"/>
    <property type="project" value="CAFA"/>
</dbReference>
<dbReference type="GO" id="GO:1990584">
    <property type="term" value="C:cardiac Troponin complex"/>
    <property type="evidence" value="ECO:0000314"/>
    <property type="project" value="CAFA"/>
</dbReference>
<dbReference type="GO" id="GO:0005829">
    <property type="term" value="C:cytosol"/>
    <property type="evidence" value="ECO:0000304"/>
    <property type="project" value="Reactome"/>
</dbReference>
<dbReference type="GO" id="GO:0030017">
    <property type="term" value="C:sarcomere"/>
    <property type="evidence" value="ECO:0000304"/>
    <property type="project" value="BHF-UCL"/>
</dbReference>
<dbReference type="GO" id="GO:0005865">
    <property type="term" value="C:striated muscle thin filament"/>
    <property type="evidence" value="ECO:0000314"/>
    <property type="project" value="UniProtKB"/>
</dbReference>
<dbReference type="GO" id="GO:0005861">
    <property type="term" value="C:troponin complex"/>
    <property type="evidence" value="ECO:0000314"/>
    <property type="project" value="UniProtKB"/>
</dbReference>
<dbReference type="GO" id="GO:0003779">
    <property type="term" value="F:actin binding"/>
    <property type="evidence" value="ECO:0000314"/>
    <property type="project" value="UniProtKB"/>
</dbReference>
<dbReference type="GO" id="GO:0042802">
    <property type="term" value="F:identical protein binding"/>
    <property type="evidence" value="ECO:0000353"/>
    <property type="project" value="IntAct"/>
</dbReference>
<dbReference type="GO" id="GO:0005523">
    <property type="term" value="F:tropomyosin binding"/>
    <property type="evidence" value="ECO:0000314"/>
    <property type="project" value="UniProtKB"/>
</dbReference>
<dbReference type="GO" id="GO:0030172">
    <property type="term" value="F:troponin C binding"/>
    <property type="evidence" value="ECO:0000353"/>
    <property type="project" value="UniProtKB"/>
</dbReference>
<dbReference type="GO" id="GO:0031013">
    <property type="term" value="F:troponin I binding"/>
    <property type="evidence" value="ECO:0000353"/>
    <property type="project" value="UniProtKB"/>
</dbReference>
<dbReference type="GO" id="GO:0060048">
    <property type="term" value="P:cardiac muscle contraction"/>
    <property type="evidence" value="ECO:0000314"/>
    <property type="project" value="CAFA"/>
</dbReference>
<dbReference type="GO" id="GO:0030049">
    <property type="term" value="P:muscle filament sliding"/>
    <property type="evidence" value="ECO:0000314"/>
    <property type="project" value="UniProtKB"/>
</dbReference>
<dbReference type="GO" id="GO:0032780">
    <property type="term" value="P:negative regulation of ATP-dependent activity"/>
    <property type="evidence" value="ECO:0000314"/>
    <property type="project" value="UniProtKB"/>
</dbReference>
<dbReference type="GO" id="GO:0032781">
    <property type="term" value="P:positive regulation of ATP-dependent activity"/>
    <property type="evidence" value="ECO:0000314"/>
    <property type="project" value="UniProtKB"/>
</dbReference>
<dbReference type="GO" id="GO:0008016">
    <property type="term" value="P:regulation of heart contraction"/>
    <property type="evidence" value="ECO:0000315"/>
    <property type="project" value="UniProtKB"/>
</dbReference>
<dbReference type="GO" id="GO:0006937">
    <property type="term" value="P:regulation of muscle contraction"/>
    <property type="evidence" value="ECO:0007669"/>
    <property type="project" value="InterPro"/>
</dbReference>
<dbReference type="GO" id="GO:0051592">
    <property type="term" value="P:response to calcium ion"/>
    <property type="evidence" value="ECO:0000314"/>
    <property type="project" value="UniProtKB"/>
</dbReference>
<dbReference type="GO" id="GO:0055010">
    <property type="term" value="P:ventricular cardiac muscle tissue morphogenesis"/>
    <property type="evidence" value="ECO:0000315"/>
    <property type="project" value="BHF-UCL"/>
</dbReference>
<dbReference type="DisProt" id="DP02705"/>
<dbReference type="FunFam" id="1.20.5.350:FF:000001">
    <property type="entry name" value="Troponin T, fast skeletal muscle"/>
    <property type="match status" value="1"/>
</dbReference>
<dbReference type="Gene3D" id="1.20.5.350">
    <property type="match status" value="1"/>
</dbReference>
<dbReference type="InterPro" id="IPR027707">
    <property type="entry name" value="TNNT"/>
</dbReference>
<dbReference type="InterPro" id="IPR001978">
    <property type="entry name" value="Troponin"/>
</dbReference>
<dbReference type="InterPro" id="IPR038077">
    <property type="entry name" value="Troponin_sf"/>
</dbReference>
<dbReference type="PANTHER" id="PTHR11521">
    <property type="entry name" value="TROPONIN T"/>
    <property type="match status" value="1"/>
</dbReference>
<dbReference type="PANTHER" id="PTHR11521:SF5">
    <property type="entry name" value="TROPONIN T, CARDIAC MUSCLE"/>
    <property type="match status" value="1"/>
</dbReference>
<dbReference type="Pfam" id="PF00992">
    <property type="entry name" value="Troponin"/>
    <property type="match status" value="2"/>
</dbReference>
<dbReference type="SUPFAM" id="SSF90250">
    <property type="entry name" value="Troponin coil-coiled subunits"/>
    <property type="match status" value="1"/>
</dbReference>